<keyword id="KW-0687">Ribonucleoprotein</keyword>
<keyword id="KW-0689">Ribosomal protein</keyword>
<reference key="1">
    <citation type="submission" date="2006-11" db="EMBL/GenBank/DDBJ databases">
        <title>Identification and characterization of a new conjugation/ type IVA secretion system (trb/tra) of L. pneumophila Corby localized on a mobile genomic island.</title>
        <authorList>
            <person name="Gloeckner G."/>
            <person name="Albert-Weissenberger C."/>
            <person name="Weinmann E."/>
            <person name="Jacobi S."/>
            <person name="Schunder E."/>
            <person name="Steinert M."/>
            <person name="Buchrieser C."/>
            <person name="Hacker J."/>
            <person name="Heuner K."/>
        </authorList>
    </citation>
    <scope>NUCLEOTIDE SEQUENCE [LARGE SCALE GENOMIC DNA]</scope>
    <source>
        <strain>Corby</strain>
    </source>
</reference>
<dbReference type="EMBL" id="CP000675">
    <property type="protein sequence ID" value="ABQ56890.1"/>
    <property type="molecule type" value="Genomic_DNA"/>
</dbReference>
<dbReference type="RefSeq" id="WP_010946104.1">
    <property type="nucleotide sequence ID" value="NZ_JAPMSS010000006.1"/>
</dbReference>
<dbReference type="SMR" id="A5IHP0"/>
<dbReference type="GeneID" id="57034358"/>
<dbReference type="KEGG" id="lpc:LPC_2989"/>
<dbReference type="HOGENOM" id="CLU_074407_2_0_6"/>
<dbReference type="GO" id="GO:0022625">
    <property type="term" value="C:cytosolic large ribosomal subunit"/>
    <property type="evidence" value="ECO:0007669"/>
    <property type="project" value="TreeGrafter"/>
</dbReference>
<dbReference type="GO" id="GO:0003735">
    <property type="term" value="F:structural constituent of ribosome"/>
    <property type="evidence" value="ECO:0007669"/>
    <property type="project" value="InterPro"/>
</dbReference>
<dbReference type="GO" id="GO:0006412">
    <property type="term" value="P:translation"/>
    <property type="evidence" value="ECO:0007669"/>
    <property type="project" value="UniProtKB-UniRule"/>
</dbReference>
<dbReference type="FunFam" id="3.90.1030.10:FF:000001">
    <property type="entry name" value="50S ribosomal protein L17"/>
    <property type="match status" value="1"/>
</dbReference>
<dbReference type="Gene3D" id="3.90.1030.10">
    <property type="entry name" value="Ribosomal protein L17"/>
    <property type="match status" value="1"/>
</dbReference>
<dbReference type="HAMAP" id="MF_01368">
    <property type="entry name" value="Ribosomal_bL17"/>
    <property type="match status" value="1"/>
</dbReference>
<dbReference type="InterPro" id="IPR000456">
    <property type="entry name" value="Ribosomal_bL17"/>
</dbReference>
<dbReference type="InterPro" id="IPR047859">
    <property type="entry name" value="Ribosomal_bL17_CS"/>
</dbReference>
<dbReference type="InterPro" id="IPR036373">
    <property type="entry name" value="Ribosomal_bL17_sf"/>
</dbReference>
<dbReference type="NCBIfam" id="TIGR00059">
    <property type="entry name" value="L17"/>
    <property type="match status" value="1"/>
</dbReference>
<dbReference type="PANTHER" id="PTHR14413:SF16">
    <property type="entry name" value="LARGE RIBOSOMAL SUBUNIT PROTEIN BL17M"/>
    <property type="match status" value="1"/>
</dbReference>
<dbReference type="PANTHER" id="PTHR14413">
    <property type="entry name" value="RIBOSOMAL PROTEIN L17"/>
    <property type="match status" value="1"/>
</dbReference>
<dbReference type="Pfam" id="PF01196">
    <property type="entry name" value="Ribosomal_L17"/>
    <property type="match status" value="1"/>
</dbReference>
<dbReference type="SUPFAM" id="SSF64263">
    <property type="entry name" value="Prokaryotic ribosomal protein L17"/>
    <property type="match status" value="1"/>
</dbReference>
<dbReference type="PROSITE" id="PS01167">
    <property type="entry name" value="RIBOSOMAL_L17"/>
    <property type="match status" value="1"/>
</dbReference>
<organism>
    <name type="scientific">Legionella pneumophila (strain Corby)</name>
    <dbReference type="NCBI Taxonomy" id="400673"/>
    <lineage>
        <taxon>Bacteria</taxon>
        <taxon>Pseudomonadati</taxon>
        <taxon>Pseudomonadota</taxon>
        <taxon>Gammaproteobacteria</taxon>
        <taxon>Legionellales</taxon>
        <taxon>Legionellaceae</taxon>
        <taxon>Legionella</taxon>
    </lineage>
</organism>
<name>RL17_LEGPC</name>
<comment type="subunit">
    <text evidence="1">Part of the 50S ribosomal subunit. Contacts protein L32.</text>
</comment>
<comment type="similarity">
    <text evidence="1">Belongs to the bacterial ribosomal protein bL17 family.</text>
</comment>
<proteinExistence type="inferred from homology"/>
<gene>
    <name evidence="1" type="primary">rplQ</name>
    <name type="ordered locus">LPC_2989</name>
</gene>
<sequence length="127" mass="14450">MRHRNSGRSFSRTSSHRKAMFSNMCCSLIEHELIRTTLPKAKDLRRYIEPLITVSKSDSVASRRRAFDILRSKSAVGKLFTDLGPRFAKRPGGYIRIIKCGYRDGDNAPMAIVELMDRPVSSDDTEE</sequence>
<accession>A5IHP0</accession>
<feature type="chain" id="PRO_1000055859" description="Large ribosomal subunit protein bL17">
    <location>
        <begin position="1"/>
        <end position="127"/>
    </location>
</feature>
<protein>
    <recommendedName>
        <fullName evidence="1">Large ribosomal subunit protein bL17</fullName>
    </recommendedName>
    <alternativeName>
        <fullName evidence="2">50S ribosomal protein L17</fullName>
    </alternativeName>
</protein>
<evidence type="ECO:0000255" key="1">
    <source>
        <dbReference type="HAMAP-Rule" id="MF_01368"/>
    </source>
</evidence>
<evidence type="ECO:0000305" key="2"/>